<comment type="function">
    <text evidence="1">The dystroglycan complex is involved in a number of processes including laminin and basement membrane assembly, sarcolemmal stability, cell survival, peripheral nerve myelination, nodal structure, cell migration, and epithelial polarization.</text>
</comment>
<comment type="function">
    <molecule>Alpha-dystroglycan</molecule>
    <text evidence="7 8">Extracellular peripheral glycoprotein that acts as a receptor for extracellular matrix proteins containing laminin-G domains. Receptor for laminin-2 (LAMA2) and agrin in peripheral nerve Schwann cells (PubMed:8798547). Also acts as a receptor for laminin LAMA5 (PubMed:16709410).</text>
</comment>
<comment type="function">
    <molecule>Beta-dystroglycan</molecule>
    <text evidence="1">Transmembrane protein that plays important roles in connecting the extracellular matrix to the cytoskeleton. Acts as a cell adhesion receptor in both muscle and non-muscle tissues. Receptor for both DMD and UTRN and, through these interactions, scaffolds axin to the cytoskeleton. Also functions in cell adhesion-mediated signaling and implicated in cell polarity (By similarity).</text>
</comment>
<comment type="subunit">
    <text evidence="2 3 4">Monomer. Heterodimer of alpha- and beta-dystroglycan subunits which are the central components of the dystrophin-glycoprotein complex. This complex then can form a dystrophin-associated glycoprotein complex (DGC) which is composed of three subcomplexes: a cytoplasmic complex comprised of DMD (or UTRN), DTNA and a number of syntrophins, such as SNTB1, SNTB2, SNTG1 and SNTG2, the transmembrane dystroglycan complex, and the sarcoglycan-sarcospan complex. Interacts (via the N-terminal of alphaDAG1) with LARGE1; the interaction enhances laminin binding (By similarity). Interacts with SGCD. Interacts with AGR2 and AGR3. Interacts (betaDAG1) with DMD; the interaction is inhibited by phosphorylation on the PPXY motif. Interacts (betaDAG1, via its PPXY motif) with UTRN (via its WWW and ZZ domains); the interaction is inhibited by phosphorylation on the PPXY motif. Interacts (betaDAG1, via its phosphorylated PPXY motif) with the SH2 domain-containing proteins, FYN, CSK, NCK and SHC. Interacts (betaDAG1) with CAV3 (via a central WW-like domain); the interaction disrupts the binding of DMD. BetaDAG1 directly interacts with ANK3, but not with ANK2; this interaction does not interfere with DMD-binding and is required for retention at costameres (By similarity). Identified in a dystroglycan complex that contains at least PRX, DRP2, UTRN, DMD and DAG1 (By similarity). Interacts with POMGNT1 (By similarity). BetaDAG1 interacts with CD93 (By similarity).</text>
</comment>
<comment type="interaction">
    <interactant intactId="EBI-8522926">
        <id>O18738</id>
    </interactant>
    <interactant intactId="EBI-7176628">
        <id>P19137</id>
        <label>Lama1</label>
    </interactant>
    <organismsDiffer>true</organismsDiffer>
    <experiments>2</experiments>
</comment>
<comment type="subcellular location">
    <molecule>Alpha-dystroglycan</molecule>
    <subcellularLocation>
        <location evidence="1">Secreted</location>
        <location evidence="1">Extracellular space</location>
    </subcellularLocation>
</comment>
<comment type="subcellular location">
    <molecule>Beta-dystroglycan</molecule>
    <subcellularLocation>
        <location evidence="1">Cell membrane</location>
        <topology>Single-pass type I membrane protein</topology>
    </subcellularLocation>
    <subcellularLocation>
        <location>Cytoplasm</location>
        <location>Cytoskeleton</location>
    </subcellularLocation>
    <subcellularLocation>
        <location>Nucleus</location>
        <location>Nucleoplasm</location>
    </subcellularLocation>
    <subcellularLocation>
        <location evidence="1">Cell membrane</location>
        <location evidence="1">Sarcolemma</location>
    </subcellularLocation>
    <subcellularLocation>
        <location evidence="1">Postsynaptic cell membrane</location>
    </subcellularLocation>
    <text evidence="1">The monomeric form translocates to the nucleus via the action of importins and depends on RAN. Nuclear transport is inhibited by Tyr-892 phosphorylation. In skeletal muscle, this phosphorylated form locates to a vesicular internal membrane compartment. In muscle cells, sarcolemma localization requires the presence of ANK2, while localization to costameres requires the presence of ANK3. Localizes to neuromuscular junctions (NMJs) in the presence of ANK2 (By similarity). Colocalizes with ERM proteins in Schwann-cell microvilli (By similarity). In peripheral nerves, localizes to the Schwann cell membrane.</text>
</comment>
<comment type="tissue specificity">
    <text evidence="7 8">Expressed in brain (at protein level) (PubMed:16709410). Expressed in the myelin sheath of peripheral nerves (PubMed:8798547).</text>
</comment>
<comment type="PTM">
    <molecule>Alpha-dystroglycan</molecule>
    <text evidence="2 7 9">O-glycosylated (PubMed:16709410, PubMed:8999917). POMGNT1 catalyzes the initial addition of N-acetylglucosamine, giving rise to the GlcNAc(beta1-2)Man(alpha1-)O-Ser/Thr moiety and thus providing the necessary basis for the addition of further carbohydrate moieties. Heavily O-glycosylated comprising of up to two thirds of its mass and the carbohydrate composition differs depending on tissue type. Mucin-type O-glycosylation is important for ligand binding activity. O-mannosylation is found in high abundance in both brain and muscle where the most abundant glycan is Sia-alpha-2-3-Gal-beta-1-4-Glc-NAc-beta-1-2-Man. In muscle, glycosylation on Thr-317, Thr-319 and Thr-379 by a phosphorylated O-mannosyl glycan with the structure 2-(N-acetylamido)-2-deoxygalactosyl-beta-1,3-2-(N-acetylamido)-2-deoxyglucosyl-beta-1,4-6-phosphomannose is mediated by like-acetylglucosaminyltransferase (LARGE1) protein amd is required for laminin binding. O-glycosylated in the N-terminal region with a core 1 or possibly core 8 glycan. The brain form displays a unique glycosylation pattern which is absent in other tissues; this form shows enhanced binding to laminin LAMA5 compared to the skeletal muscle form (PubMed:16709410).</text>
</comment>
<comment type="PTM">
    <molecule>Beta-dystroglycan</molecule>
    <text evidence="2">N-glycosylated.</text>
</comment>
<comment type="PTM">
    <text evidence="1">Autolytic cleavage produces the alpha and beta subunits. In cutaneous cells, as well as in certain pathological conditions, shedding of beta-dystroglycan can occur releasing a peptide of about 30 kDa (By similarity).</text>
</comment>
<comment type="PTM">
    <text evidence="1">SRC-mediated phosphorylation of the PPXY motif of the beta subunit recruits SH2 domain-containing proteins, but inhibits binding to WWW domain-containing proteins, DMD and UTRN. This phosphorylation also inhibits nuclear entry (By similarity).</text>
</comment>
<proteinExistence type="evidence at protein level"/>
<name>DAG1_BOVIN</name>
<sequence>MRMSVGSAVPLPLWGRTFLLLLSVAVTQSHWPSEPSEAVRDWENQLEASMHSALSDLHETVPTVVGIPDGTAVVGRSFRVTIPTDLIASNGEVIKVSAAGKEALPSWLHWDPQSHTLEGLPLDTDKGVHYISVSAARLGANGSHVPQTSSVFSIEVYPEDHSEPQSLRAASPDPGEVVSLVCAADEPVTVLTVILDADLTKMTPKQRIDLLRRMRGFSEVEPHNMKLVPVVNNRLFDMSAFMAGPGNAKKVVENGALLSWKLGCCLNQNSVPDIRGVEVPAREGAMSAQLGYPVVGWHIANKKPSLPKRIRRQIHATPTPVTAIGPPTTAIQEPPSRIVPTPTSPAIAPPTETMAPPVRDPVPGKPTVTIRTRGAIIQTPTLGPIQPTRVSEAGTTVPSQIRPTMTIPGYMEPSTVTTPPTTTTKKPRVSTPRPATPSTDSSTTTTRRPTKKPRTSRPVPRVTTKAPITRLETASPATRMRTTTSGVPHGGEPNQRPELKNHIDRVDAWVGTYFEVKIPSDTFYDNEDTTTDKLKLTLKLREQQLVGEKSWVQFNSNSQLMYGLPDSSHVGKHEYFMHATDKGGLSAVDAFEIHVHRRPQGDKAPARFKAKLTGDPAAVTNDIHKKIALVKKLAFAFGDRNCSTITLQNITRGSIVVEWTNNTLPLEPCPKEQITALSRRIAEDDGKPRGAFVNALEPDFQAMSITVTGSGSCRHLQFVPVAPPMRVPSEAPATEVPDRDPEKSSEDDVYLHTVIPAVVVAAILLIAGIIAMICYRKKRKGKLTLEDQATFIKKGVPIIFADELDDSKPPPSSSMPLILQEEKAPLPPPEYPNQSMPETTPLNQDTVGEYAPLRDEDPSAPPYQPPPPFTAPMEGKGSRPKNMTPYRSPPPYVPP</sequence>
<dbReference type="EMBL" id="AB009079">
    <property type="protein sequence ID" value="BAA23650.1"/>
    <property type="molecule type" value="mRNA"/>
</dbReference>
<dbReference type="RefSeq" id="NP_776587.1">
    <property type="nucleotide sequence ID" value="NM_174162.1"/>
</dbReference>
<dbReference type="SMR" id="O18738"/>
<dbReference type="BioGRID" id="158770">
    <property type="interactions" value="4"/>
</dbReference>
<dbReference type="FunCoup" id="O18738">
    <property type="interactions" value="442"/>
</dbReference>
<dbReference type="IntAct" id="O18738">
    <property type="interactions" value="4"/>
</dbReference>
<dbReference type="MINT" id="O18738"/>
<dbReference type="STRING" id="9913.ENSBTAP00000068898"/>
<dbReference type="MEROPS" id="S72.001"/>
<dbReference type="GlyConnect" id="39">
    <property type="glycosylation" value="3 O-Linked glycans"/>
</dbReference>
<dbReference type="GlyCosmos" id="O18738">
    <property type="glycosylation" value="7 sites, 6 glycans"/>
</dbReference>
<dbReference type="GlyGen" id="O18738">
    <property type="glycosylation" value="7 sites"/>
</dbReference>
<dbReference type="PaxDb" id="9913-ENSBTAP00000015385"/>
<dbReference type="PeptideAtlas" id="O18738"/>
<dbReference type="GeneID" id="281439"/>
<dbReference type="KEGG" id="bta:281439"/>
<dbReference type="CTD" id="1605"/>
<dbReference type="eggNOG" id="KOG3781">
    <property type="taxonomic scope" value="Eukaryota"/>
</dbReference>
<dbReference type="InParanoid" id="O18738"/>
<dbReference type="OrthoDB" id="5990676at2759"/>
<dbReference type="Proteomes" id="UP000009136">
    <property type="component" value="Unplaced"/>
</dbReference>
<dbReference type="GO" id="GO:0005604">
    <property type="term" value="C:basement membrane"/>
    <property type="evidence" value="ECO:0000318"/>
    <property type="project" value="GO_Central"/>
</dbReference>
<dbReference type="GO" id="GO:0005737">
    <property type="term" value="C:cytoplasm"/>
    <property type="evidence" value="ECO:0007669"/>
    <property type="project" value="UniProtKB-KW"/>
</dbReference>
<dbReference type="GO" id="GO:0005856">
    <property type="term" value="C:cytoskeleton"/>
    <property type="evidence" value="ECO:0007669"/>
    <property type="project" value="UniProtKB-SubCell"/>
</dbReference>
<dbReference type="GO" id="GO:0016011">
    <property type="term" value="C:dystroglycan complex"/>
    <property type="evidence" value="ECO:0000318"/>
    <property type="project" value="GO_Central"/>
</dbReference>
<dbReference type="GO" id="GO:0005576">
    <property type="term" value="C:extracellular region"/>
    <property type="evidence" value="ECO:0000304"/>
    <property type="project" value="Reactome"/>
</dbReference>
<dbReference type="GO" id="GO:0005615">
    <property type="term" value="C:extracellular space"/>
    <property type="evidence" value="ECO:0000318"/>
    <property type="project" value="GO_Central"/>
</dbReference>
<dbReference type="GO" id="GO:0016020">
    <property type="term" value="C:membrane"/>
    <property type="evidence" value="ECO:0000314"/>
    <property type="project" value="UniProtKB"/>
</dbReference>
<dbReference type="GO" id="GO:0005654">
    <property type="term" value="C:nucleoplasm"/>
    <property type="evidence" value="ECO:0007669"/>
    <property type="project" value="UniProtKB-SubCell"/>
</dbReference>
<dbReference type="GO" id="GO:0005886">
    <property type="term" value="C:plasma membrane"/>
    <property type="evidence" value="ECO:0000304"/>
    <property type="project" value="Reactome"/>
</dbReference>
<dbReference type="GO" id="GO:0045211">
    <property type="term" value="C:postsynaptic membrane"/>
    <property type="evidence" value="ECO:0007669"/>
    <property type="project" value="UniProtKB-SubCell"/>
</dbReference>
<dbReference type="GO" id="GO:0042383">
    <property type="term" value="C:sarcolemma"/>
    <property type="evidence" value="ECO:0000318"/>
    <property type="project" value="GO_Central"/>
</dbReference>
<dbReference type="GO" id="GO:0005509">
    <property type="term" value="F:calcium ion binding"/>
    <property type="evidence" value="ECO:0007669"/>
    <property type="project" value="InterPro"/>
</dbReference>
<dbReference type="GO" id="GO:0043236">
    <property type="term" value="F:laminin binding"/>
    <property type="evidence" value="ECO:0000314"/>
    <property type="project" value="UniProtKB"/>
</dbReference>
<dbReference type="GO" id="GO:0007411">
    <property type="term" value="P:axon guidance"/>
    <property type="evidence" value="ECO:0000318"/>
    <property type="project" value="GO_Central"/>
</dbReference>
<dbReference type="GO" id="GO:0002009">
    <property type="term" value="P:morphogenesis of an epithelium"/>
    <property type="evidence" value="ECO:0000318"/>
    <property type="project" value="GO_Central"/>
</dbReference>
<dbReference type="GO" id="GO:0016203">
    <property type="term" value="P:muscle attachment"/>
    <property type="evidence" value="ECO:0000318"/>
    <property type="project" value="GO_Central"/>
</dbReference>
<dbReference type="GO" id="GO:0021675">
    <property type="term" value="P:nerve development"/>
    <property type="evidence" value="ECO:0000318"/>
    <property type="project" value="GO_Central"/>
</dbReference>
<dbReference type="CDD" id="cd11305">
    <property type="entry name" value="alpha_DG_C"/>
    <property type="match status" value="1"/>
</dbReference>
<dbReference type="CDD" id="cd11303">
    <property type="entry name" value="Dystroglycan_repeat"/>
    <property type="match status" value="2"/>
</dbReference>
<dbReference type="FunFam" id="2.60.40.10:FF:000555">
    <property type="entry name" value="Dystroglycan 1"/>
    <property type="match status" value="1"/>
</dbReference>
<dbReference type="FunFam" id="2.60.40.10:FF:000684">
    <property type="entry name" value="Dystroglycan 1"/>
    <property type="match status" value="1"/>
</dbReference>
<dbReference type="FunFam" id="3.30.70.1040:FF:000001">
    <property type="entry name" value="Dystroglycan 1"/>
    <property type="match status" value="1"/>
</dbReference>
<dbReference type="Gene3D" id="3.30.70.1040">
    <property type="entry name" value="Dystroglycan, domain 2"/>
    <property type="match status" value="1"/>
</dbReference>
<dbReference type="Gene3D" id="2.60.40.10">
    <property type="entry name" value="Immunoglobulins"/>
    <property type="match status" value="2"/>
</dbReference>
<dbReference type="InterPro" id="IPR027468">
    <property type="entry name" value="Alpha-dystroglycan_domain_2"/>
</dbReference>
<dbReference type="InterPro" id="IPR041631">
    <property type="entry name" value="Alpha_DG1_N2"/>
</dbReference>
<dbReference type="InterPro" id="IPR006644">
    <property type="entry name" value="Cadg"/>
</dbReference>
<dbReference type="InterPro" id="IPR015919">
    <property type="entry name" value="Cadherin-like_sf"/>
</dbReference>
<dbReference type="InterPro" id="IPR008465">
    <property type="entry name" value="DAG1_C"/>
</dbReference>
<dbReference type="InterPro" id="IPR013783">
    <property type="entry name" value="Ig-like_fold"/>
</dbReference>
<dbReference type="InterPro" id="IPR030398">
    <property type="entry name" value="SEA_DG_dom"/>
</dbReference>
<dbReference type="PANTHER" id="PTHR21559:SF22">
    <property type="entry name" value="DYSTROGLYCAN 1"/>
    <property type="match status" value="1"/>
</dbReference>
<dbReference type="PANTHER" id="PTHR21559">
    <property type="entry name" value="DYSTROGLYCAN-RELATED"/>
    <property type="match status" value="1"/>
</dbReference>
<dbReference type="Pfam" id="PF18424">
    <property type="entry name" value="a_DG1_N2"/>
    <property type="match status" value="1"/>
</dbReference>
<dbReference type="Pfam" id="PF05454">
    <property type="entry name" value="DAG1"/>
    <property type="match status" value="1"/>
</dbReference>
<dbReference type="Pfam" id="PF05345">
    <property type="entry name" value="He_PIG"/>
    <property type="match status" value="1"/>
</dbReference>
<dbReference type="PRINTS" id="PR01217">
    <property type="entry name" value="PRICHEXTENSN"/>
</dbReference>
<dbReference type="SMART" id="SM00736">
    <property type="entry name" value="CADG"/>
    <property type="match status" value="2"/>
</dbReference>
<dbReference type="SUPFAM" id="SSF49313">
    <property type="entry name" value="Cadherin-like"/>
    <property type="match status" value="2"/>
</dbReference>
<dbReference type="SUPFAM" id="SSF111006">
    <property type="entry name" value="Dystroglycan, domain 2"/>
    <property type="match status" value="1"/>
</dbReference>
<dbReference type="PROSITE" id="PS51699">
    <property type="entry name" value="SEA_DG"/>
    <property type="match status" value="1"/>
</dbReference>
<keyword id="KW-1003">Cell membrane</keyword>
<keyword id="KW-0963">Cytoplasm</keyword>
<keyword id="KW-0206">Cytoskeleton</keyword>
<keyword id="KW-1015">Disulfide bond</keyword>
<keyword id="KW-0325">Glycoprotein</keyword>
<keyword id="KW-0472">Membrane</keyword>
<keyword id="KW-0539">Nucleus</keyword>
<keyword id="KW-0597">Phosphoprotein</keyword>
<keyword id="KW-0628">Postsynaptic cell membrane</keyword>
<keyword id="KW-1185">Reference proteome</keyword>
<keyword id="KW-0964">Secreted</keyword>
<keyword id="KW-0732">Signal</keyword>
<keyword id="KW-0770">Synapse</keyword>
<keyword id="KW-0812">Transmembrane</keyword>
<keyword id="KW-1133">Transmembrane helix</keyword>
<reference key="1">
    <citation type="submission" date="1997-11" db="EMBL/GenBank/DDBJ databases">
        <authorList>
            <person name="Shimizu H."/>
        </authorList>
    </citation>
    <scope>NUCLEOTIDE SEQUENCE [MRNA]</scope>
</reference>
<reference key="2">
    <citation type="journal article" date="1996" name="J. Biol. Chem.">
        <title>Dystroglycan is a dual receptor for agrin and laminin-2 in Schwann cell membrane.</title>
        <authorList>
            <person name="Yamada H."/>
            <person name="Denzer A.J."/>
            <person name="Hori H."/>
            <person name="Tanaka T."/>
            <person name="Anderson L.V."/>
            <person name="Fujita S."/>
            <person name="Fukuta-Ohi H."/>
            <person name="Shimizu T."/>
            <person name="Ruegg M.A."/>
            <person name="Matsumura K."/>
        </authorList>
    </citation>
    <scope>LIGAND-BINDING</scope>
    <scope>SUBCELLULAR LOCATION</scope>
    <scope>TISSUE SPECIFICITY</scope>
</reference>
<reference key="3">
    <citation type="journal article" date="1997" name="J. Biol. Chem.">
        <title>Structures of sialylated O-linked oligosaccharides of bovine peripheral nerve alpha-dystroglycan. The role of a novel O-mannosyl-type oligosaccharide in the binding of alpha-dystroglycan with laminin.</title>
        <authorList>
            <person name="Chiba A."/>
            <person name="Matsumura K."/>
            <person name="Yamada H."/>
            <person name="Inazu T."/>
            <person name="Shimizu T."/>
            <person name="Kusunoki S."/>
            <person name="Kanazawa I."/>
            <person name="Kobata A."/>
            <person name="Endo T."/>
        </authorList>
    </citation>
    <scope>STRUCTURE OF CARBOHYDRATES</scope>
    <scope>LIGAND BINDING</scope>
</reference>
<reference key="4">
    <citation type="journal article" date="1999" name="J. Biol. Chem.">
        <title>Characterization of the transmembrane molecular architecture of the dystroglycan complex in Schwann cells.</title>
        <authorList>
            <person name="Saito F."/>
            <person name="Masaki T."/>
            <person name="Kamakura K."/>
            <person name="Anderson L.V.B."/>
            <person name="Fujita S."/>
            <person name="Fukuta-Ohi H."/>
            <person name="Sunada Y."/>
            <person name="Shimizu T."/>
            <person name="Matsumura K."/>
        </authorList>
    </citation>
    <scope>SUBCELLULAR LOCATION</scope>
</reference>
<reference key="5">
    <citation type="journal article" date="2006" name="FEBS Lett.">
        <title>Brain alpha-dystroglycan displays unique glycoepitopes and preferential binding to laminin-10/11.</title>
        <authorList>
            <person name="McDearmon E.L."/>
            <person name="Combs A.C."/>
            <person name="Sekiguchi K."/>
            <person name="Fujiwara H."/>
            <person name="Ervasti J.M."/>
        </authorList>
    </citation>
    <scope>FUNCTION</scope>
    <scope>TISSUE SPECIFICITY</scope>
    <scope>GLYCOSYLATION</scope>
</reference>
<gene>
    <name evidence="2" type="primary">DAG1</name>
</gene>
<feature type="signal peptide" evidence="5">
    <location>
        <begin position="1"/>
        <end position="29"/>
    </location>
</feature>
<feature type="chain" id="PRO_0000021061" description="Alpha-dystroglycan">
    <location>
        <begin position="30"/>
        <end position="653"/>
    </location>
</feature>
<feature type="chain" id="PRO_0000021062" description="Beta-dystroglycan">
    <location>
        <begin position="654"/>
        <end position="895"/>
    </location>
</feature>
<feature type="topological domain" description="Extracellular" evidence="5">
    <location>
        <begin position="654"/>
        <end position="749"/>
    </location>
</feature>
<feature type="transmembrane region" description="Helical" evidence="5">
    <location>
        <begin position="750"/>
        <end position="775"/>
    </location>
</feature>
<feature type="topological domain" description="Cytoplasmic" evidence="5">
    <location>
        <begin position="776"/>
        <end position="895"/>
    </location>
</feature>
<feature type="domain" description="Peptidase S72">
    <location>
        <begin position="603"/>
        <end position="712"/>
    </location>
</feature>
<feature type="region of interest" description="Required for laminin recognition" evidence="1">
    <location>
        <begin position="30"/>
        <end position="408"/>
    </location>
</feature>
<feature type="region of interest" description="O-glycosylated at one site" evidence="1">
    <location>
        <begin position="49"/>
        <end position="71"/>
    </location>
</feature>
<feature type="region of interest" description="Mucin-like domain" evidence="1">
    <location>
        <begin position="316"/>
        <end position="485"/>
    </location>
</feature>
<feature type="region of interest" description="Disordered" evidence="6">
    <location>
        <begin position="381"/>
        <end position="500"/>
    </location>
</feature>
<feature type="region of interest" description="O-glycosylated at seven sites with GalNAc" evidence="1">
    <location>
        <begin position="463"/>
        <end position="485"/>
    </location>
</feature>
<feature type="region of interest" description="Disordered" evidence="6">
    <location>
        <begin position="724"/>
        <end position="747"/>
    </location>
</feature>
<feature type="region of interest" description="Required for interaction with CAV3" evidence="1">
    <location>
        <begin position="819"/>
        <end position="895"/>
    </location>
</feature>
<feature type="region of interest" description="Disordered" evidence="6">
    <location>
        <begin position="823"/>
        <end position="895"/>
    </location>
</feature>
<feature type="region of interest" description="Required for binding DMD and UTRN" evidence="1">
    <location>
        <begin position="880"/>
        <end position="895"/>
    </location>
</feature>
<feature type="short sequence motif" description="Nuclear localization signal" evidence="1">
    <location>
        <begin position="776"/>
        <end position="782"/>
    </location>
</feature>
<feature type="short sequence motif" description="PPXY motif" evidence="1">
    <location>
        <begin position="889"/>
        <end position="892"/>
    </location>
</feature>
<feature type="compositionally biased region" description="Polar residues" evidence="6">
    <location>
        <begin position="393"/>
        <end position="403"/>
    </location>
</feature>
<feature type="compositionally biased region" description="Low complexity" evidence="6">
    <location>
        <begin position="413"/>
        <end position="447"/>
    </location>
</feature>
<feature type="compositionally biased region" description="Basic and acidic residues" evidence="6">
    <location>
        <begin position="736"/>
        <end position="747"/>
    </location>
</feature>
<feature type="compositionally biased region" description="Polar residues" evidence="6">
    <location>
        <begin position="832"/>
        <end position="846"/>
    </location>
</feature>
<feature type="compositionally biased region" description="Pro residues" evidence="6">
    <location>
        <begin position="859"/>
        <end position="870"/>
    </location>
</feature>
<feature type="site" description="Cleavage; by autolysis" evidence="1">
    <location>
        <begin position="653"/>
        <end position="654"/>
    </location>
</feature>
<feature type="site" description="Cleavage; by MMP9" evidence="1">
    <location>
        <begin position="715"/>
        <end position="716"/>
    </location>
</feature>
<feature type="modified residue" description="Phosphothreonine" evidence="2">
    <location>
        <position position="790"/>
    </location>
</feature>
<feature type="modified residue" description="Phosphotyrosine; by SRC" evidence="2">
    <location>
        <position position="892"/>
    </location>
</feature>
<feature type="glycosylation site" description="N-linked (GlcNAc...) asparagine" evidence="5">
    <location>
        <position position="141"/>
    </location>
</feature>
<feature type="glycosylation site" description="O-linked (Man6P...) threonine" evidence="2">
    <location>
        <position position="317"/>
    </location>
</feature>
<feature type="glycosylation site" description="O-linked (Man6P...) threonine" evidence="2">
    <location>
        <position position="319"/>
    </location>
</feature>
<feature type="glycosylation site" description="O-linked (Man6P...) threonine" evidence="1">
    <location>
        <position position="379"/>
    </location>
</feature>
<feature type="glycosylation site" description="N-linked (GlcNAc...) asparagine" evidence="5">
    <location>
        <position position="641"/>
    </location>
</feature>
<feature type="glycosylation site" description="N-linked (GlcNAc...) asparagine" evidence="5">
    <location>
        <position position="649"/>
    </location>
</feature>
<feature type="glycosylation site" description="N-linked (GlcNAc...) asparagine" evidence="5">
    <location>
        <position position="661"/>
    </location>
</feature>
<feature type="disulfide bond" evidence="2">
    <location>
        <begin position="182"/>
        <end position="264"/>
    </location>
</feature>
<feature type="disulfide bond" evidence="2">
    <location>
        <begin position="669"/>
        <end position="713"/>
    </location>
</feature>
<evidence type="ECO:0000250" key="1"/>
<evidence type="ECO:0000250" key="2">
    <source>
        <dbReference type="UniProtKB" id="Q14118"/>
    </source>
</evidence>
<evidence type="ECO:0000250" key="3">
    <source>
        <dbReference type="UniProtKB" id="Q28685"/>
    </source>
</evidence>
<evidence type="ECO:0000250" key="4">
    <source>
        <dbReference type="UniProtKB" id="Q62165"/>
    </source>
</evidence>
<evidence type="ECO:0000255" key="5"/>
<evidence type="ECO:0000256" key="6">
    <source>
        <dbReference type="SAM" id="MobiDB-lite"/>
    </source>
</evidence>
<evidence type="ECO:0000269" key="7">
    <source>
    </source>
</evidence>
<evidence type="ECO:0000269" key="8">
    <source>
    </source>
</evidence>
<evidence type="ECO:0000269" key="9">
    <source>
    </source>
</evidence>
<evidence type="ECO:0000303" key="10">
    <source>
    </source>
</evidence>
<organism>
    <name type="scientific">Bos taurus</name>
    <name type="common">Bovine</name>
    <dbReference type="NCBI Taxonomy" id="9913"/>
    <lineage>
        <taxon>Eukaryota</taxon>
        <taxon>Metazoa</taxon>
        <taxon>Chordata</taxon>
        <taxon>Craniata</taxon>
        <taxon>Vertebrata</taxon>
        <taxon>Euteleostomi</taxon>
        <taxon>Mammalia</taxon>
        <taxon>Eutheria</taxon>
        <taxon>Laurasiatheria</taxon>
        <taxon>Artiodactyla</taxon>
        <taxon>Ruminantia</taxon>
        <taxon>Pecora</taxon>
        <taxon>Bovidae</taxon>
        <taxon>Bovinae</taxon>
        <taxon>Bos</taxon>
    </lineage>
</organism>
<protein>
    <recommendedName>
        <fullName evidence="2">Dystroglycan 1</fullName>
    </recommendedName>
    <alternativeName>
        <fullName evidence="10">Dystroglycan</fullName>
    </alternativeName>
    <alternativeName>
        <fullName evidence="2">Dystrophin-associated glycoprotein 1</fullName>
    </alternativeName>
    <component>
        <recommendedName>
            <fullName>Alpha-dystroglycan</fullName>
            <shortName>Alpha-DG</shortName>
        </recommendedName>
    </component>
    <component>
        <recommendedName>
            <fullName>Beta-dystroglycan</fullName>
            <shortName>Beta-DG</shortName>
        </recommendedName>
    </component>
</protein>
<accession>O18738</accession>